<reference key="1">
    <citation type="journal article" date="1999" name="Virology">
        <title>Isolation and characterization of APSE-1, a bacteriophage infecting the secondary endosymbiont of acyrthosiphon pisum.</title>
        <authorList>
            <person name="van der Wilk F."/>
            <person name="Dullemans A.M."/>
            <person name="Verbeek M."/>
            <person name="van den Heuvel J.F.J.M."/>
        </authorList>
    </citation>
    <scope>NUCLEOTIDE SEQUENCE [LARGE SCALE GENOMIC DNA]</scope>
</reference>
<accession>Q9T1U3</accession>
<keyword id="KW-0238">DNA-binding</keyword>
<keyword id="KW-1185">Reference proteome</keyword>
<keyword id="KW-0804">Transcription</keyword>
<keyword id="KW-0889">Transcription antitermination</keyword>
<keyword id="KW-0805">Transcription regulation</keyword>
<sequence>MRRDIQQVLERWGTWARDNNTGIDWSPIAAGFKGLLPLRPSMRPSCSDEDGRIIDNCVSQLQQVRQPEELSLIIAYYVKGYSKRAIARRRRVDEGLIRAKLLIAEGFIDGCLSLLAVRLDMDPEVKMYSPQKSGKRISAVRKKFVNVL</sequence>
<feature type="chain" id="PRO_0000073890" description="Probable antitermination protein Q">
    <location>
        <begin position="1"/>
        <end position="148"/>
    </location>
</feature>
<dbReference type="EMBL" id="AF157835">
    <property type="protein sequence ID" value="AAF03999.1"/>
    <property type="molecule type" value="Genomic_DNA"/>
</dbReference>
<dbReference type="RefSeq" id="NP_050966.1">
    <property type="nucleotide sequence ID" value="NC_000935.1"/>
</dbReference>
<dbReference type="SMR" id="Q9T1U3"/>
<dbReference type="KEGG" id="vg:1262299"/>
<dbReference type="Proteomes" id="UP000000853">
    <property type="component" value="Genome"/>
</dbReference>
<dbReference type="GO" id="GO:0003677">
    <property type="term" value="F:DNA binding"/>
    <property type="evidence" value="ECO:0007669"/>
    <property type="project" value="UniProtKB-KW"/>
</dbReference>
<dbReference type="GO" id="GO:0031564">
    <property type="term" value="P:transcription antitermination"/>
    <property type="evidence" value="ECO:0007669"/>
    <property type="project" value="UniProtKB-KW"/>
</dbReference>
<dbReference type="InterPro" id="IPR010534">
    <property type="entry name" value="Phage_933W_GpQ"/>
</dbReference>
<dbReference type="Pfam" id="PF06530">
    <property type="entry name" value="Phage_antitermQ"/>
    <property type="match status" value="1"/>
</dbReference>
<evidence type="ECO:0000250" key="1"/>
<evidence type="ECO:0000305" key="2"/>
<organism>
    <name type="scientific">Acyrthosiphon pisum secondary endosymbiont phage 1</name>
    <name type="common">Bacteriophage APSE-1</name>
    <dbReference type="NCBI Taxonomy" id="2682836"/>
    <lineage>
        <taxon>Viruses</taxon>
        <taxon>Duplodnaviria</taxon>
        <taxon>Heunggongvirae</taxon>
        <taxon>Uroviricota</taxon>
        <taxon>Caudoviricetes</taxon>
        <taxon>Sendosyvirus</taxon>
        <taxon>Sendosyvirus APSE1</taxon>
    </lineage>
</organism>
<proteinExistence type="inferred from homology"/>
<protein>
    <recommendedName>
        <fullName>Probable antitermination protein Q</fullName>
    </recommendedName>
    <alternativeName>
        <fullName>P5</fullName>
    </alternativeName>
</protein>
<organismHost>
    <name type="scientific">Escherichia coli</name>
    <dbReference type="NCBI Taxonomy" id="562"/>
</organismHost>
<comment type="function">
    <text evidence="1">Positively regulates expression of some phage genes. Bacterial host RNA polymerase modified by antitermination proteins transcribes through termination sites that otherwise prevent expression of the regulated genes (By similarity).</text>
</comment>
<comment type="similarity">
    <text evidence="2">Belongs to the phage antitermination Q type 1 family.</text>
</comment>
<name>REGQ_BPAPS</name>
<gene>
    <name type="primary">5</name>
</gene>